<gene>
    <name evidence="1" type="primary">rpmA</name>
    <name type="ordered locus">NGO_1677</name>
</gene>
<protein>
    <recommendedName>
        <fullName evidence="1">Large ribosomal subunit protein bL27</fullName>
    </recommendedName>
    <alternativeName>
        <fullName evidence="3">50S ribosomal protein L27</fullName>
    </alternativeName>
</protein>
<comment type="similarity">
    <text evidence="1">Belongs to the bacterial ribosomal protein bL27 family.</text>
</comment>
<feature type="chain" id="PRO_0000181131" description="Large ribosomal subunit protein bL27">
    <location>
        <begin position="1"/>
        <end position="90"/>
    </location>
</feature>
<feature type="region of interest" description="Disordered" evidence="2">
    <location>
        <begin position="1"/>
        <end position="21"/>
    </location>
</feature>
<keyword id="KW-1185">Reference proteome</keyword>
<keyword id="KW-0687">Ribonucleoprotein</keyword>
<keyword id="KW-0689">Ribosomal protein</keyword>
<organism>
    <name type="scientific">Neisseria gonorrhoeae (strain ATCC 700825 / FA 1090)</name>
    <dbReference type="NCBI Taxonomy" id="242231"/>
    <lineage>
        <taxon>Bacteria</taxon>
        <taxon>Pseudomonadati</taxon>
        <taxon>Pseudomonadota</taxon>
        <taxon>Betaproteobacteria</taxon>
        <taxon>Neisseriales</taxon>
        <taxon>Neisseriaceae</taxon>
        <taxon>Neisseria</taxon>
    </lineage>
</organism>
<dbReference type="EMBL" id="AE004969">
    <property type="protein sequence ID" value="AAW90302.1"/>
    <property type="molecule type" value="Genomic_DNA"/>
</dbReference>
<dbReference type="RefSeq" id="WP_003689821.1">
    <property type="nucleotide sequence ID" value="NC_002946.2"/>
</dbReference>
<dbReference type="RefSeq" id="YP_208714.1">
    <property type="nucleotide sequence ID" value="NC_002946.2"/>
</dbReference>
<dbReference type="SMR" id="Q5F685"/>
<dbReference type="STRING" id="242231.NGO_1677"/>
<dbReference type="GeneID" id="86929657"/>
<dbReference type="KEGG" id="ngo:NGO_1677"/>
<dbReference type="PATRIC" id="fig|242231.10.peg.1999"/>
<dbReference type="HOGENOM" id="CLU_095424_4_1_4"/>
<dbReference type="Proteomes" id="UP000000535">
    <property type="component" value="Chromosome"/>
</dbReference>
<dbReference type="GO" id="GO:0022625">
    <property type="term" value="C:cytosolic large ribosomal subunit"/>
    <property type="evidence" value="ECO:0007669"/>
    <property type="project" value="TreeGrafter"/>
</dbReference>
<dbReference type="GO" id="GO:0003735">
    <property type="term" value="F:structural constituent of ribosome"/>
    <property type="evidence" value="ECO:0007669"/>
    <property type="project" value="InterPro"/>
</dbReference>
<dbReference type="GO" id="GO:0006412">
    <property type="term" value="P:translation"/>
    <property type="evidence" value="ECO:0007669"/>
    <property type="project" value="UniProtKB-UniRule"/>
</dbReference>
<dbReference type="FunFam" id="2.40.50.100:FF:000001">
    <property type="entry name" value="50S ribosomal protein L27"/>
    <property type="match status" value="1"/>
</dbReference>
<dbReference type="Gene3D" id="2.40.50.100">
    <property type="match status" value="1"/>
</dbReference>
<dbReference type="HAMAP" id="MF_00539">
    <property type="entry name" value="Ribosomal_bL27"/>
    <property type="match status" value="1"/>
</dbReference>
<dbReference type="InterPro" id="IPR001684">
    <property type="entry name" value="Ribosomal_bL27"/>
</dbReference>
<dbReference type="InterPro" id="IPR018261">
    <property type="entry name" value="Ribosomal_bL27_CS"/>
</dbReference>
<dbReference type="NCBIfam" id="TIGR00062">
    <property type="entry name" value="L27"/>
    <property type="match status" value="1"/>
</dbReference>
<dbReference type="PANTHER" id="PTHR15893:SF0">
    <property type="entry name" value="LARGE RIBOSOMAL SUBUNIT PROTEIN BL27M"/>
    <property type="match status" value="1"/>
</dbReference>
<dbReference type="PANTHER" id="PTHR15893">
    <property type="entry name" value="RIBOSOMAL PROTEIN L27"/>
    <property type="match status" value="1"/>
</dbReference>
<dbReference type="Pfam" id="PF01016">
    <property type="entry name" value="Ribosomal_L27"/>
    <property type="match status" value="1"/>
</dbReference>
<dbReference type="PRINTS" id="PR00063">
    <property type="entry name" value="RIBOSOMALL27"/>
</dbReference>
<dbReference type="SUPFAM" id="SSF110324">
    <property type="entry name" value="Ribosomal L27 protein-like"/>
    <property type="match status" value="1"/>
</dbReference>
<dbReference type="PROSITE" id="PS00831">
    <property type="entry name" value="RIBOSOMAL_L27"/>
    <property type="match status" value="1"/>
</dbReference>
<evidence type="ECO:0000255" key="1">
    <source>
        <dbReference type="HAMAP-Rule" id="MF_00539"/>
    </source>
</evidence>
<evidence type="ECO:0000256" key="2">
    <source>
        <dbReference type="SAM" id="MobiDB-lite"/>
    </source>
</evidence>
<evidence type="ECO:0000305" key="3"/>
<proteinExistence type="inferred from homology"/>
<name>RL27_NEIG1</name>
<accession>Q5F685</accession>
<sequence>MASKKAGGSTRNGRDSEAKRLGVKAYGNELIPAGSIIVRQRGTKFHAGDNVGMGKDHTLFAKIDGYVEFKTKGALNRKTVSIRPYTGSEE</sequence>
<reference key="1">
    <citation type="submission" date="2003-03" db="EMBL/GenBank/DDBJ databases">
        <title>The complete genome sequence of Neisseria gonorrhoeae.</title>
        <authorList>
            <person name="Lewis L.A."/>
            <person name="Gillaspy A.F."/>
            <person name="McLaughlin R.E."/>
            <person name="Gipson M."/>
            <person name="Ducey T.F."/>
            <person name="Ownbey T."/>
            <person name="Hartman K."/>
            <person name="Nydick C."/>
            <person name="Carson M.B."/>
            <person name="Vaughn J."/>
            <person name="Thomson C."/>
            <person name="Song L."/>
            <person name="Lin S."/>
            <person name="Yuan X."/>
            <person name="Najar F."/>
            <person name="Zhan M."/>
            <person name="Ren Q."/>
            <person name="Zhu H."/>
            <person name="Qi S."/>
            <person name="Kenton S.M."/>
            <person name="Lai H."/>
            <person name="White J.D."/>
            <person name="Clifton S."/>
            <person name="Roe B.A."/>
            <person name="Dyer D.W."/>
        </authorList>
    </citation>
    <scope>NUCLEOTIDE SEQUENCE [LARGE SCALE GENOMIC DNA]</scope>
    <source>
        <strain>ATCC 700825 / FA 1090</strain>
    </source>
</reference>